<protein>
    <recommendedName>
        <fullName>Protein 0.6B</fullName>
    </recommendedName>
    <component>
        <recommendedName>
            <fullName>Protein 0.6A</fullName>
        </recommendedName>
    </component>
</protein>
<organismHost>
    <name type="scientific">Escherichia coli</name>
    <dbReference type="NCBI Taxonomy" id="562"/>
</organismHost>
<sequence length="111" mass="13235">MMKHYVMPIHTSNGATVCTPDGFAMKQRIERLKRELRINRKINKIGSGYDRTHDGLKKGYMPNGTLYAANRRIVRTWRENNLERRKDKRGRRGIDERKRLKPRNSPHLNRH</sequence>
<gene>
    <name type="primary">0.6A</name>
    <name type="synonym">0.6</name>
</gene>
<gene>
    <name type="primary">0.6B</name>
    <name type="synonym">0.65</name>
</gene>
<dbReference type="EMBL" id="V01146">
    <property type="protein sequence ID" value="CAA24387.1"/>
    <property type="molecule type" value="Genomic_DNA"/>
</dbReference>
<dbReference type="EMBL" id="V01146">
    <property type="protein sequence ID" value="CAA24388.1"/>
    <property type="molecule type" value="Genomic_DNA"/>
</dbReference>
<dbReference type="EMBL" id="V01127">
    <property type="protein sequence ID" value="CAA24330.1"/>
    <property type="molecule type" value="Genomic_DNA"/>
</dbReference>
<dbReference type="EMBL" id="V01127">
    <property type="protein sequence ID" value="CAA24331.1"/>
    <property type="status" value="ALT_SEQ"/>
    <property type="molecule type" value="Genomic_DNA"/>
</dbReference>
<dbReference type="PIR" id="D43002">
    <property type="entry name" value="W0BP67"/>
</dbReference>
<dbReference type="PIR" id="S42286">
    <property type="entry name" value="S42286"/>
</dbReference>
<dbReference type="RefSeq" id="NP_041957.1">
    <property type="nucleotide sequence ID" value="NC_001604.1"/>
</dbReference>
<dbReference type="RefSeq" id="NP_041958.1">
    <property type="nucleotide sequence ID" value="NC_001604.1"/>
</dbReference>
<dbReference type="SMR" id="P03778"/>
<dbReference type="KEGG" id="vg:1261061"/>
<dbReference type="KEGG" id="vg:1261071"/>
<dbReference type="OrthoDB" id="27846at10239"/>
<dbReference type="Proteomes" id="UP000000840">
    <property type="component" value="Genome"/>
</dbReference>
<evidence type="ECO:0000256" key="1">
    <source>
        <dbReference type="SAM" id="MobiDB-lite"/>
    </source>
</evidence>
<keyword id="KW-0244">Early protein</keyword>
<keyword id="KW-1185">Reference proteome</keyword>
<reference key="1">
    <citation type="journal article" date="1983" name="J. Mol. Biol.">
        <title>Complete nucleotide sequence of bacteriophage T7 DNA and the locations of T7 genetic elements.</title>
        <authorList>
            <person name="Dunn J.J."/>
            <person name="Studier F.W."/>
        </authorList>
    </citation>
    <scope>NUCLEOTIDE SEQUENCE [LARGE SCALE GENOMIC DNA]</scope>
</reference>
<reference key="2">
    <citation type="journal article" date="1981" name="J. Mol. Biol.">
        <title>Nucleotide sequence from the genetic left end of bacteriophage T7 DNA to the beginning of gene 4.</title>
        <authorList>
            <person name="Dunn J.J."/>
            <person name="Studier F.W."/>
        </authorList>
    </citation>
    <scope>NUCLEOTIDE SEQUENCE [GENOMIC DNA]</scope>
</reference>
<proteinExistence type="predicted"/>
<feature type="chain" id="PRO_0000003351" description="Protein 0.6B">
    <location>
        <begin position="1"/>
        <end position="111"/>
    </location>
</feature>
<feature type="chain" id="PRO_0000003352" description="Protein 0.6A">
    <location>
        <begin position="1"/>
        <end position="53"/>
    </location>
</feature>
<feature type="region of interest" description="Disordered" evidence="1">
    <location>
        <begin position="82"/>
        <end position="111"/>
    </location>
</feature>
<feature type="compositionally biased region" description="Basic residues" evidence="1">
    <location>
        <begin position="99"/>
        <end position="111"/>
    </location>
</feature>
<organism>
    <name type="scientific">Escherichia phage T7</name>
    <name type="common">Bacteriophage T7</name>
    <dbReference type="NCBI Taxonomy" id="10760"/>
    <lineage>
        <taxon>Viruses</taxon>
        <taxon>Duplodnaviria</taxon>
        <taxon>Heunggongvirae</taxon>
        <taxon>Uroviricota</taxon>
        <taxon>Caudoviricetes</taxon>
        <taxon>Autographiviridae</taxon>
        <taxon>Studiervirinae</taxon>
        <taxon>Teseptimavirus</taxon>
        <taxon>Teseptimavirus T7</taxon>
    </lineage>
</organism>
<comment type="miscellaneous">
    <text>A protein has been genetically mapped between the loci 0.6 and 0.7. Two open reading frames exist in this region, 0.6A and 0.6B. Protein 0.6B exists due to frameshifting that occurs prior to the TGA stop codon of 0.6A.</text>
</comment>
<accession>P03778</accession>
<name>Y06_BPT7</name>